<reference key="1">
    <citation type="journal article" date="2004" name="Science">
        <title>The 1.2-megabase genome sequence of Mimivirus.</title>
        <authorList>
            <person name="Raoult D."/>
            <person name="Audic S."/>
            <person name="Robert C."/>
            <person name="Abergel C."/>
            <person name="Renesto P."/>
            <person name="Ogata H."/>
            <person name="La Scola B."/>
            <person name="Susan M."/>
            <person name="Claverie J.-M."/>
        </authorList>
    </citation>
    <scope>NUCLEOTIDE SEQUENCE [LARGE SCALE GENOMIC DNA]</scope>
    <source>
        <strain>Rowbotham-Bradford</strain>
    </source>
</reference>
<protein>
    <recommendedName>
        <fullName>Uncharacterized protein R855</fullName>
    </recommendedName>
</protein>
<name>YR855_MIMIV</name>
<gene>
    <name type="ordered locus">MIMI_R855</name>
</gene>
<organism>
    <name type="scientific">Acanthamoeba polyphaga mimivirus</name>
    <name type="common">APMV</name>
    <dbReference type="NCBI Taxonomy" id="212035"/>
    <lineage>
        <taxon>Viruses</taxon>
        <taxon>Varidnaviria</taxon>
        <taxon>Bamfordvirae</taxon>
        <taxon>Nucleocytoviricota</taxon>
        <taxon>Megaviricetes</taxon>
        <taxon>Imitervirales</taxon>
        <taxon>Mimiviridae</taxon>
        <taxon>Megamimivirinae</taxon>
        <taxon>Mimivirus</taxon>
        <taxon>Mimivirus bradfordmassiliense</taxon>
    </lineage>
</organism>
<organismHost>
    <name type="scientific">Acanthamoeba polyphaga</name>
    <name type="common">Amoeba</name>
    <dbReference type="NCBI Taxonomy" id="5757"/>
</organismHost>
<keyword id="KW-1185">Reference proteome</keyword>
<accession>Q5UQQ8</accession>
<dbReference type="EMBL" id="AY653733">
    <property type="protein sequence ID" value="AAV51113.1"/>
    <property type="molecule type" value="Genomic_DNA"/>
</dbReference>
<dbReference type="SMR" id="Q5UQQ8"/>
<dbReference type="KEGG" id="vg:9925516"/>
<dbReference type="Proteomes" id="UP000001134">
    <property type="component" value="Genome"/>
</dbReference>
<dbReference type="Gene3D" id="1.10.10.1710">
    <property type="entry name" value="Deoxyribodipyrimidine photolyase-related"/>
    <property type="match status" value="1"/>
</dbReference>
<dbReference type="Gene3D" id="1.10.579.10">
    <property type="entry name" value="DNA Cyclobutane Dipyrimidine Photolyase, subunit A, domain 3"/>
    <property type="match status" value="1"/>
</dbReference>
<dbReference type="InterPro" id="IPR036134">
    <property type="entry name" value="Crypto/Photolyase_FAD-like_sf"/>
</dbReference>
<dbReference type="InterPro" id="IPR052551">
    <property type="entry name" value="UV-DNA_repair_photolyase"/>
</dbReference>
<dbReference type="PANTHER" id="PTHR38657">
    <property type="entry name" value="SLR1343 PROTEIN"/>
    <property type="match status" value="1"/>
</dbReference>
<dbReference type="PANTHER" id="PTHR38657:SF1">
    <property type="entry name" value="SLR1343 PROTEIN"/>
    <property type="match status" value="1"/>
</dbReference>
<dbReference type="SUPFAM" id="SSF48173">
    <property type="entry name" value="Cryptochrome/photolyase FAD-binding domain"/>
    <property type="match status" value="1"/>
</dbReference>
<feature type="chain" id="PRO_0000071374" description="Uncharacterized protein R855">
    <location>
        <begin position="1"/>
        <end position="123"/>
    </location>
</feature>
<sequence length="123" mass="14865">MIICNFMNICMIDPNDVYKWFMEFSLDSYDWVMINNVYSMGLFADGGLTTTKPYITSSNYVLKMSNIKKDGYWNVVWDTLYYNFIYHNYDKFKGRGKIYLSQWDRQRKKQEILKLAPKIMNRL</sequence>
<proteinExistence type="predicted"/>